<sequence>MERPQLDSMSQDLSEALKEATKEVHIRAENSEFMRNFQKGQVSREGFKLVMASLYHIYTALEEEIERNKQNPVYAPLYFPEELHRRAALEQDMAFWYGPHWQEAIPYTPATQHYVKRLHEVGGTHPELLVAHAYTRYLGDLSGGQVLKKIAQKAMALPSSGEGLAFFTFPSIDNPTKFKQLYRARMNTLEMTPEVKHRVTEEAKTAFLLNIELFEELQALLTEEHKDQSPSQTEFLRQRPASLVQDTTSAETPRGKSQISTSSSQTPLLRWVLTLSFLLATVAVGIYAM</sequence>
<evidence type="ECO:0000250" key="1">
    <source>
        <dbReference type="UniProtKB" id="P09601"/>
    </source>
</evidence>
<evidence type="ECO:0000250" key="2">
    <source>
        <dbReference type="UniProtKB" id="P14901"/>
    </source>
</evidence>
<evidence type="ECO:0000255" key="3"/>
<evidence type="ECO:0000256" key="4">
    <source>
        <dbReference type="SAM" id="MobiDB-lite"/>
    </source>
</evidence>
<evidence type="ECO:0000269" key="5">
    <source>
    </source>
</evidence>
<evidence type="ECO:0000269" key="6">
    <source>
    </source>
</evidence>
<evidence type="ECO:0000269" key="7">
    <source>
    </source>
</evidence>
<evidence type="ECO:0000303" key="8">
    <source>
    </source>
</evidence>
<evidence type="ECO:0000305" key="9"/>
<evidence type="ECO:0000305" key="10">
    <source>
    </source>
</evidence>
<evidence type="ECO:0000305" key="11">
    <source>
    </source>
</evidence>
<evidence type="ECO:0007744" key="12">
    <source>
    </source>
</evidence>
<evidence type="ECO:0007829" key="13">
    <source>
        <dbReference type="PDB" id="1J02"/>
    </source>
</evidence>
<protein>
    <recommendedName>
        <fullName>Heme oxygenase 1</fullName>
        <shortName>HO-1</shortName>
        <ecNumber evidence="5 6 7">1.14.14.18</ecNumber>
    </recommendedName>
    <alternativeName>
        <fullName>HSP32</fullName>
    </alternativeName>
    <component>
        <recommendedName>
            <fullName evidence="8">Heme oxygenase 1 soluble form</fullName>
        </recommendedName>
    </component>
</protein>
<feature type="chain" id="PRO_0000209690" description="Heme oxygenase 1">
    <location>
        <begin position="1"/>
        <end position="289"/>
    </location>
</feature>
<feature type="chain" id="PRO_0000455625" description="Heme oxygenase 1 soluble form" evidence="10">
    <location>
        <begin position="1"/>
        <end position="266"/>
    </location>
</feature>
<feature type="topological domain" description="Cytoplasmic" evidence="1">
    <location>
        <begin position="1"/>
        <end position="266"/>
    </location>
</feature>
<feature type="transmembrane region" description="Helical; Anchor for type IV membrane protein" evidence="3">
    <location>
        <begin position="267"/>
        <end position="289"/>
    </location>
</feature>
<feature type="region of interest" description="Disordered" evidence="4">
    <location>
        <begin position="225"/>
        <end position="261"/>
    </location>
</feature>
<feature type="compositionally biased region" description="Polar residues" evidence="4">
    <location>
        <begin position="244"/>
        <end position="261"/>
    </location>
</feature>
<feature type="binding site" evidence="1">
    <location>
        <position position="18"/>
    </location>
    <ligand>
        <name>heme b</name>
        <dbReference type="ChEBI" id="CHEBI:60344"/>
    </ligand>
</feature>
<feature type="binding site" description="axial binding residue" evidence="1">
    <location>
        <position position="25"/>
    </location>
    <ligand>
        <name>heme b</name>
        <dbReference type="ChEBI" id="CHEBI:60344"/>
    </ligand>
    <ligandPart>
        <name>Fe</name>
        <dbReference type="ChEBI" id="CHEBI:18248"/>
    </ligandPart>
</feature>
<feature type="binding site" evidence="1">
    <location>
        <position position="134"/>
    </location>
    <ligand>
        <name>heme b</name>
        <dbReference type="ChEBI" id="CHEBI:60344"/>
    </ligand>
</feature>
<feature type="binding site" evidence="1">
    <location>
        <position position="183"/>
    </location>
    <ligand>
        <name>heme b</name>
        <dbReference type="ChEBI" id="CHEBI:60344"/>
    </ligand>
</feature>
<feature type="site" description="Important for catalytic activity" evidence="1">
    <location>
        <position position="140"/>
    </location>
</feature>
<feature type="modified residue" description="Phosphoserine" evidence="1">
    <location>
        <position position="229"/>
    </location>
</feature>
<feature type="modified residue" description="Phosphoserine" evidence="12">
    <location>
        <position position="242"/>
    </location>
</feature>
<feature type="helix" evidence="13">
    <location>
        <begin position="13"/>
        <end position="29"/>
    </location>
</feature>
<feature type="helix" evidence="13">
    <location>
        <begin position="32"/>
        <end position="39"/>
    </location>
</feature>
<feature type="helix" evidence="13">
    <location>
        <begin position="44"/>
        <end position="67"/>
    </location>
</feature>
<feature type="turn" evidence="13">
    <location>
        <begin position="68"/>
        <end position="70"/>
    </location>
</feature>
<feature type="turn" evidence="13">
    <location>
        <begin position="72"/>
        <end position="74"/>
    </location>
</feature>
<feature type="helix" evidence="13">
    <location>
        <begin position="75"/>
        <end position="77"/>
    </location>
</feature>
<feature type="helix" evidence="13">
    <location>
        <begin position="80"/>
        <end position="83"/>
    </location>
</feature>
<feature type="helix" evidence="13">
    <location>
        <begin position="86"/>
        <end position="97"/>
    </location>
</feature>
<feature type="helix" evidence="13">
    <location>
        <begin position="101"/>
        <end position="103"/>
    </location>
</feature>
<feature type="helix" evidence="13">
    <location>
        <begin position="109"/>
        <end position="124"/>
    </location>
</feature>
<feature type="helix" evidence="13">
    <location>
        <begin position="126"/>
        <end position="128"/>
    </location>
</feature>
<feature type="helix" evidence="13">
    <location>
        <begin position="129"/>
        <end position="140"/>
    </location>
</feature>
<feature type="helix" evidence="13">
    <location>
        <begin position="143"/>
        <end position="155"/>
    </location>
</feature>
<feature type="helix" evidence="13">
    <location>
        <begin position="165"/>
        <end position="167"/>
    </location>
</feature>
<feature type="helix" evidence="13">
    <location>
        <begin position="175"/>
        <end position="186"/>
    </location>
</feature>
<feature type="helix" evidence="13">
    <location>
        <begin position="193"/>
        <end position="221"/>
    </location>
</feature>
<name>HMOX1_RAT</name>
<dbReference type="EC" id="1.14.14.18" evidence="5 6 7"/>
<dbReference type="EMBL" id="J02722">
    <property type="protein sequence ID" value="AAA41346.1"/>
    <property type="molecule type" value="Genomic_DNA"/>
</dbReference>
<dbReference type="EMBL" id="BC091164">
    <property type="protein sequence ID" value="AAH91164.1"/>
    <property type="molecule type" value="mRNA"/>
</dbReference>
<dbReference type="PIR" id="A92645">
    <property type="entry name" value="OHRTD"/>
</dbReference>
<dbReference type="RefSeq" id="NP_036712.1">
    <property type="nucleotide sequence ID" value="NM_012580.2"/>
</dbReference>
<dbReference type="RefSeq" id="XP_038953398.1">
    <property type="nucleotide sequence ID" value="XM_039097470.2"/>
</dbReference>
<dbReference type="RefSeq" id="XP_063133845.1">
    <property type="nucleotide sequence ID" value="XM_063277775.1"/>
</dbReference>
<dbReference type="RefSeq" id="XP_063133846.1">
    <property type="nucleotide sequence ID" value="XM_063277776.1"/>
</dbReference>
<dbReference type="RefSeq" id="XP_063133847.1">
    <property type="nucleotide sequence ID" value="XM_063277777.1"/>
</dbReference>
<dbReference type="RefSeq" id="XP_063133848.1">
    <property type="nucleotide sequence ID" value="XM_063277778.1"/>
</dbReference>
<dbReference type="RefSeq" id="XP_063133849.1">
    <property type="nucleotide sequence ID" value="XM_063277779.1"/>
</dbReference>
<dbReference type="RefSeq" id="XP_063133850.1">
    <property type="nucleotide sequence ID" value="XM_063277780.1"/>
</dbReference>
<dbReference type="RefSeq" id="XP_063133851.1">
    <property type="nucleotide sequence ID" value="XM_063277781.1"/>
</dbReference>
<dbReference type="RefSeq" id="XP_063133852.1">
    <property type="nucleotide sequence ID" value="XM_063277782.1"/>
</dbReference>
<dbReference type="PDB" id="1DVE">
    <property type="method" value="X-ray"/>
    <property type="resolution" value="2.40 A"/>
    <property type="chains" value="A=1-267"/>
</dbReference>
<dbReference type="PDB" id="1DVG">
    <property type="method" value="X-ray"/>
    <property type="resolution" value="2.20 A"/>
    <property type="chains" value="A/B=1-267"/>
</dbReference>
<dbReference type="PDB" id="1IRM">
    <property type="method" value="X-ray"/>
    <property type="resolution" value="2.55 A"/>
    <property type="chains" value="A/B/C=1-267"/>
</dbReference>
<dbReference type="PDB" id="1IVJ">
    <property type="method" value="X-ray"/>
    <property type="resolution" value="1.90 A"/>
    <property type="chains" value="A=1-267"/>
</dbReference>
<dbReference type="PDB" id="1IX3">
    <property type="method" value="X-ray"/>
    <property type="resolution" value="2.00 A"/>
    <property type="chains" value="A=1-267"/>
</dbReference>
<dbReference type="PDB" id="1IX4">
    <property type="method" value="X-ray"/>
    <property type="resolution" value="1.80 A"/>
    <property type="chains" value="A=1-267"/>
</dbReference>
<dbReference type="PDB" id="1J02">
    <property type="method" value="X-ray"/>
    <property type="resolution" value="1.70 A"/>
    <property type="chains" value="A=1-267"/>
</dbReference>
<dbReference type="PDB" id="1J2C">
    <property type="method" value="X-ray"/>
    <property type="resolution" value="2.40 A"/>
    <property type="chains" value="A=1-267"/>
</dbReference>
<dbReference type="PDB" id="1UBB">
    <property type="method" value="X-ray"/>
    <property type="resolution" value="2.30 A"/>
    <property type="chains" value="A=1-267"/>
</dbReference>
<dbReference type="PDB" id="1ULX">
    <property type="method" value="X-ray"/>
    <property type="resolution" value="2.00 A"/>
    <property type="chains" value="A=1-267"/>
</dbReference>
<dbReference type="PDB" id="1VGI">
    <property type="method" value="X-ray"/>
    <property type="resolution" value="1.90 A"/>
    <property type="chains" value="A=1-267"/>
</dbReference>
<dbReference type="PDB" id="2DY5">
    <property type="method" value="X-ray"/>
    <property type="resolution" value="2.70 A"/>
    <property type="chains" value="A=1-267"/>
</dbReference>
<dbReference type="PDB" id="2E7E">
    <property type="method" value="X-ray"/>
    <property type="resolution" value="1.85 A"/>
    <property type="chains" value="A=1-267"/>
</dbReference>
<dbReference type="PDB" id="2ZVU">
    <property type="method" value="X-ray"/>
    <property type="resolution" value="2.20 A"/>
    <property type="chains" value="A=1-267"/>
</dbReference>
<dbReference type="PDB" id="3I9T">
    <property type="method" value="X-ray"/>
    <property type="resolution" value="2.15 A"/>
    <property type="chains" value="A=1-261"/>
</dbReference>
<dbReference type="PDB" id="3I9U">
    <property type="method" value="X-ray"/>
    <property type="resolution" value="2.25 A"/>
    <property type="chains" value="A=1-261"/>
</dbReference>
<dbReference type="PDB" id="3WKT">
    <property type="method" value="X-ray"/>
    <property type="resolution" value="4.30 A"/>
    <property type="chains" value="C/D=1-267"/>
</dbReference>
<dbReference type="PDB" id="4G7L">
    <property type="method" value="X-ray"/>
    <property type="resolution" value="1.80 A"/>
    <property type="chains" value="A=1-267"/>
</dbReference>
<dbReference type="PDB" id="4G7P">
    <property type="method" value="X-ray"/>
    <property type="resolution" value="1.90 A"/>
    <property type="chains" value="A=1-267"/>
</dbReference>
<dbReference type="PDB" id="4G7T">
    <property type="method" value="X-ray"/>
    <property type="resolution" value="1.90 A"/>
    <property type="chains" value="A=1-267"/>
</dbReference>
<dbReference type="PDB" id="4G7U">
    <property type="method" value="X-ray"/>
    <property type="resolution" value="1.90 A"/>
    <property type="chains" value="A=1-267"/>
</dbReference>
<dbReference type="PDB" id="4G8P">
    <property type="method" value="X-ray"/>
    <property type="resolution" value="1.90 A"/>
    <property type="chains" value="A=1-267"/>
</dbReference>
<dbReference type="PDB" id="4G8U">
    <property type="method" value="X-ray"/>
    <property type="resolution" value="2.10 A"/>
    <property type="chains" value="A=1-267"/>
</dbReference>
<dbReference type="PDB" id="4G8W">
    <property type="method" value="X-ray"/>
    <property type="resolution" value="2.40 A"/>
    <property type="chains" value="A=1-267"/>
</dbReference>
<dbReference type="PDB" id="4G98">
    <property type="method" value="X-ray"/>
    <property type="resolution" value="2.30 A"/>
    <property type="chains" value="A=1-267"/>
</dbReference>
<dbReference type="PDB" id="4G99">
    <property type="method" value="X-ray"/>
    <property type="resolution" value="2.30 A"/>
    <property type="chains" value="A=1-267"/>
</dbReference>
<dbReference type="PDB" id="4MEC">
    <property type="method" value="X-ray"/>
    <property type="resolution" value="3.20 A"/>
    <property type="chains" value="A/B/C/D/E/F/G=1-232"/>
</dbReference>
<dbReference type="PDB" id="6J79">
    <property type="method" value="X-ray"/>
    <property type="resolution" value="3.33 A"/>
    <property type="chains" value="A/B=1-233"/>
</dbReference>
<dbReference type="PDB" id="6J7A">
    <property type="method" value="X-ray"/>
    <property type="resolution" value="3.27 A"/>
    <property type="chains" value="A/B=1-238"/>
</dbReference>
<dbReference type="PDB" id="6J7I">
    <property type="method" value="X-ray"/>
    <property type="resolution" value="3.30 A"/>
    <property type="chains" value="A/B=1-235"/>
</dbReference>
<dbReference type="PDBsum" id="1DVE"/>
<dbReference type="PDBsum" id="1DVG"/>
<dbReference type="PDBsum" id="1IRM"/>
<dbReference type="PDBsum" id="1IVJ"/>
<dbReference type="PDBsum" id="1IX3"/>
<dbReference type="PDBsum" id="1IX4"/>
<dbReference type="PDBsum" id="1J02"/>
<dbReference type="PDBsum" id="1J2C"/>
<dbReference type="PDBsum" id="1UBB"/>
<dbReference type="PDBsum" id="1ULX"/>
<dbReference type="PDBsum" id="1VGI"/>
<dbReference type="PDBsum" id="2DY5"/>
<dbReference type="PDBsum" id="2E7E"/>
<dbReference type="PDBsum" id="2ZVU"/>
<dbReference type="PDBsum" id="3I9T"/>
<dbReference type="PDBsum" id="3I9U"/>
<dbReference type="PDBsum" id="3WKT"/>
<dbReference type="PDBsum" id="4G7L"/>
<dbReference type="PDBsum" id="4G7P"/>
<dbReference type="PDBsum" id="4G7T"/>
<dbReference type="PDBsum" id="4G7U"/>
<dbReference type="PDBsum" id="4G8P"/>
<dbReference type="PDBsum" id="4G8U"/>
<dbReference type="PDBsum" id="4G8W"/>
<dbReference type="PDBsum" id="4G98"/>
<dbReference type="PDBsum" id="4G99"/>
<dbReference type="PDBsum" id="4MEC"/>
<dbReference type="PDBsum" id="6J79"/>
<dbReference type="PDBsum" id="6J7A"/>
<dbReference type="PDBsum" id="6J7I"/>
<dbReference type="BMRB" id="P06762"/>
<dbReference type="SMR" id="P06762"/>
<dbReference type="BioGRID" id="246615">
    <property type="interactions" value="2"/>
</dbReference>
<dbReference type="FunCoup" id="P06762">
    <property type="interactions" value="332"/>
</dbReference>
<dbReference type="MINT" id="P06762"/>
<dbReference type="STRING" id="10116.ENSRNOP00000019192"/>
<dbReference type="BindingDB" id="P06762"/>
<dbReference type="ChEMBL" id="CHEMBL5035"/>
<dbReference type="DrugCentral" id="P06762"/>
<dbReference type="GuidetoPHARMACOLOGY" id="1441"/>
<dbReference type="iPTMnet" id="P06762"/>
<dbReference type="PhosphoSitePlus" id="P06762"/>
<dbReference type="jPOST" id="P06762"/>
<dbReference type="PaxDb" id="10116-ENSRNOP00000019192"/>
<dbReference type="GeneID" id="24451"/>
<dbReference type="KEGG" id="rno:24451"/>
<dbReference type="UCSC" id="RGD:2806">
    <property type="organism name" value="rat"/>
</dbReference>
<dbReference type="AGR" id="RGD:2806"/>
<dbReference type="CTD" id="3162"/>
<dbReference type="RGD" id="2806">
    <property type="gene designation" value="Hmox1"/>
</dbReference>
<dbReference type="VEuPathDB" id="HostDB:ENSRNOG00000014117"/>
<dbReference type="eggNOG" id="KOG4480">
    <property type="taxonomic scope" value="Eukaryota"/>
</dbReference>
<dbReference type="HOGENOM" id="CLU_057050_0_1_1"/>
<dbReference type="InParanoid" id="P06762"/>
<dbReference type="OrthoDB" id="652091at2759"/>
<dbReference type="PhylomeDB" id="P06762"/>
<dbReference type="TreeFam" id="TF314786"/>
<dbReference type="BRENDA" id="1.14.14.18">
    <property type="organism ID" value="5301"/>
</dbReference>
<dbReference type="BRENDA" id="1.3.1.24">
    <property type="organism ID" value="5301"/>
</dbReference>
<dbReference type="Reactome" id="R-RNO-189483">
    <property type="pathway name" value="Heme degradation"/>
</dbReference>
<dbReference type="Reactome" id="R-RNO-917937">
    <property type="pathway name" value="Iron uptake and transport"/>
</dbReference>
<dbReference type="Reactome" id="R-RNO-9609523">
    <property type="pathway name" value="Insertion of tail-anchored proteins into the endoplasmic reticulum membrane"/>
</dbReference>
<dbReference type="Reactome" id="R-RNO-9707564">
    <property type="pathway name" value="Cytoprotection by HMOX1"/>
</dbReference>
<dbReference type="Reactome" id="R-RNO-9707587">
    <property type="pathway name" value="Regulation of HMOX1 expression and activity"/>
</dbReference>
<dbReference type="SABIO-RK" id="P06762"/>
<dbReference type="EvolutionaryTrace" id="P06762"/>
<dbReference type="PRO" id="PR:P06762"/>
<dbReference type="Proteomes" id="UP000002494">
    <property type="component" value="Chromosome 19"/>
</dbReference>
<dbReference type="Bgee" id="ENSRNOG00000014117">
    <property type="expression patterns" value="Expressed in spleen and 18 other cell types or tissues"/>
</dbReference>
<dbReference type="GO" id="GO:0005901">
    <property type="term" value="C:caveola"/>
    <property type="evidence" value="ECO:0000314"/>
    <property type="project" value="RGD"/>
</dbReference>
<dbReference type="GO" id="GO:0005829">
    <property type="term" value="C:cytosol"/>
    <property type="evidence" value="ECO:0000266"/>
    <property type="project" value="RGD"/>
</dbReference>
<dbReference type="GO" id="GO:0005783">
    <property type="term" value="C:endoplasmic reticulum"/>
    <property type="evidence" value="ECO:0000314"/>
    <property type="project" value="BHF-UCL"/>
</dbReference>
<dbReference type="GO" id="GO:0005789">
    <property type="term" value="C:endoplasmic reticulum membrane"/>
    <property type="evidence" value="ECO:0000250"/>
    <property type="project" value="UniProtKB"/>
</dbReference>
<dbReference type="GO" id="GO:0005634">
    <property type="term" value="C:nucleus"/>
    <property type="evidence" value="ECO:0000314"/>
    <property type="project" value="BHF-UCL"/>
</dbReference>
<dbReference type="GO" id="GO:0048471">
    <property type="term" value="C:perinuclear region of cytoplasm"/>
    <property type="evidence" value="ECO:0000266"/>
    <property type="project" value="RGD"/>
</dbReference>
<dbReference type="GO" id="GO:0052869">
    <property type="term" value="F:arachidonate omega-hydroxylase activity"/>
    <property type="evidence" value="ECO:0000315"/>
    <property type="project" value="RGD"/>
</dbReference>
<dbReference type="GO" id="GO:0019899">
    <property type="term" value="F:enzyme binding"/>
    <property type="evidence" value="ECO:0000353"/>
    <property type="project" value="BHF-UCL"/>
</dbReference>
<dbReference type="GO" id="GO:0020037">
    <property type="term" value="F:heme binding"/>
    <property type="evidence" value="ECO:0000314"/>
    <property type="project" value="RGD"/>
</dbReference>
<dbReference type="GO" id="GO:0004392">
    <property type="term" value="F:heme oxygenase (decyclizing) activity"/>
    <property type="evidence" value="ECO:0000314"/>
    <property type="project" value="UniProtKB"/>
</dbReference>
<dbReference type="GO" id="GO:0042802">
    <property type="term" value="F:identical protein binding"/>
    <property type="evidence" value="ECO:0000266"/>
    <property type="project" value="RGD"/>
</dbReference>
<dbReference type="GO" id="GO:0046872">
    <property type="term" value="F:metal ion binding"/>
    <property type="evidence" value="ECO:0007669"/>
    <property type="project" value="UniProtKB-KW"/>
</dbReference>
<dbReference type="GO" id="GO:0004630">
    <property type="term" value="F:phospholipase D activity"/>
    <property type="evidence" value="ECO:0000314"/>
    <property type="project" value="RGD"/>
</dbReference>
<dbReference type="GO" id="GO:0042803">
    <property type="term" value="F:protein homodimerization activity"/>
    <property type="evidence" value="ECO:0000266"/>
    <property type="project" value="RGD"/>
</dbReference>
<dbReference type="GO" id="GO:0005198">
    <property type="term" value="F:structural molecule activity"/>
    <property type="evidence" value="ECO:0000266"/>
    <property type="project" value="RGD"/>
</dbReference>
<dbReference type="GO" id="GO:0001525">
    <property type="term" value="P:angiogenesis"/>
    <property type="evidence" value="ECO:0000314"/>
    <property type="project" value="RGD"/>
</dbReference>
<dbReference type="GO" id="GO:0071243">
    <property type="term" value="P:cellular response to arsenic-containing substance"/>
    <property type="evidence" value="ECO:0000266"/>
    <property type="project" value="RGD"/>
</dbReference>
<dbReference type="GO" id="GO:0071276">
    <property type="term" value="P:cellular response to cadmium ion"/>
    <property type="evidence" value="ECO:0000266"/>
    <property type="project" value="RGD"/>
</dbReference>
<dbReference type="GO" id="GO:0072719">
    <property type="term" value="P:cellular response to cisplatin"/>
    <property type="evidence" value="ECO:0000266"/>
    <property type="project" value="RGD"/>
</dbReference>
<dbReference type="GO" id="GO:0034605">
    <property type="term" value="P:cellular response to heat"/>
    <property type="evidence" value="ECO:0000266"/>
    <property type="project" value="RGD"/>
</dbReference>
<dbReference type="GO" id="GO:0031670">
    <property type="term" value="P:cellular response to nutrient"/>
    <property type="evidence" value="ECO:0000270"/>
    <property type="project" value="RGD"/>
</dbReference>
<dbReference type="GO" id="GO:1904019">
    <property type="term" value="P:epithelial cell apoptotic process"/>
    <property type="evidence" value="ECO:0000266"/>
    <property type="project" value="RGD"/>
</dbReference>
<dbReference type="GO" id="GO:0034101">
    <property type="term" value="P:erythrocyte homeostasis"/>
    <property type="evidence" value="ECO:0000266"/>
    <property type="project" value="RGD"/>
</dbReference>
<dbReference type="GO" id="GO:0042167">
    <property type="term" value="P:heme catabolic process"/>
    <property type="evidence" value="ECO:0000314"/>
    <property type="project" value="RGD"/>
</dbReference>
<dbReference type="GO" id="GO:0042168">
    <property type="term" value="P:heme metabolic process"/>
    <property type="evidence" value="ECO:0000266"/>
    <property type="project" value="RGD"/>
</dbReference>
<dbReference type="GO" id="GO:0006788">
    <property type="term" value="P:heme oxidation"/>
    <property type="evidence" value="ECO:0000266"/>
    <property type="project" value="RGD"/>
</dbReference>
<dbReference type="GO" id="GO:0006879">
    <property type="term" value="P:intracellular iron ion homeostasis"/>
    <property type="evidence" value="ECO:0000266"/>
    <property type="project" value="RGD"/>
</dbReference>
<dbReference type="GO" id="GO:0035556">
    <property type="term" value="P:intracellular signal transduction"/>
    <property type="evidence" value="ECO:0000314"/>
    <property type="project" value="RGD"/>
</dbReference>
<dbReference type="GO" id="GO:0008630">
    <property type="term" value="P:intrinsic apoptotic signaling pathway in response to DNA damage"/>
    <property type="evidence" value="ECO:0000314"/>
    <property type="project" value="RGD"/>
</dbReference>
<dbReference type="GO" id="GO:0097421">
    <property type="term" value="P:liver regeneration"/>
    <property type="evidence" value="ECO:0000315"/>
    <property type="project" value="RGD"/>
</dbReference>
<dbReference type="GO" id="GO:0016236">
    <property type="term" value="P:macroautophagy"/>
    <property type="evidence" value="ECO:0000266"/>
    <property type="project" value="RGD"/>
</dbReference>
<dbReference type="GO" id="GO:0060586">
    <property type="term" value="P:multicellular organismal-level iron ion homeostasis"/>
    <property type="evidence" value="ECO:0000266"/>
    <property type="project" value="RGD"/>
</dbReference>
<dbReference type="GO" id="GO:0043922">
    <property type="term" value="P:negative regulation by host of viral transcription"/>
    <property type="evidence" value="ECO:0000266"/>
    <property type="project" value="RGD"/>
</dbReference>
<dbReference type="GO" id="GO:0008285">
    <property type="term" value="P:negative regulation of cell population proliferation"/>
    <property type="evidence" value="ECO:0000314"/>
    <property type="project" value="RGD"/>
</dbReference>
<dbReference type="GO" id="GO:1904036">
    <property type="term" value="P:negative regulation of epithelial cell apoptotic process"/>
    <property type="evidence" value="ECO:0000315"/>
    <property type="project" value="RGD"/>
</dbReference>
<dbReference type="GO" id="GO:1902042">
    <property type="term" value="P:negative regulation of extrinsic apoptotic signaling pathway via death domain receptors"/>
    <property type="evidence" value="ECO:0000266"/>
    <property type="project" value="RGD"/>
</dbReference>
<dbReference type="GO" id="GO:0110076">
    <property type="term" value="P:negative regulation of ferroptosis"/>
    <property type="evidence" value="ECO:0000250"/>
    <property type="project" value="UniProtKB"/>
</dbReference>
<dbReference type="GO" id="GO:0016242">
    <property type="term" value="P:negative regulation of macroautophagy"/>
    <property type="evidence" value="ECO:0000266"/>
    <property type="project" value="RGD"/>
</dbReference>
<dbReference type="GO" id="GO:0032764">
    <property type="term" value="P:negative regulation of mast cell cytokine production"/>
    <property type="evidence" value="ECO:0000314"/>
    <property type="project" value="RGD"/>
</dbReference>
<dbReference type="GO" id="GO:0043305">
    <property type="term" value="P:negative regulation of mast cell degranulation"/>
    <property type="evidence" value="ECO:0000314"/>
    <property type="project" value="RGD"/>
</dbReference>
<dbReference type="GO" id="GO:0010656">
    <property type="term" value="P:negative regulation of muscle cell apoptotic process"/>
    <property type="evidence" value="ECO:0000314"/>
    <property type="project" value="RGD"/>
</dbReference>
<dbReference type="GO" id="GO:0043524">
    <property type="term" value="P:negative regulation of neuron apoptotic process"/>
    <property type="evidence" value="ECO:0000315"/>
    <property type="project" value="RGD"/>
</dbReference>
<dbReference type="GO" id="GO:0048662">
    <property type="term" value="P:negative regulation of smooth muscle cell proliferation"/>
    <property type="evidence" value="ECO:0000315"/>
    <property type="project" value="RGD"/>
</dbReference>
<dbReference type="GO" id="GO:1904706">
    <property type="term" value="P:negative regulation of vascular associated smooth muscle cell proliferation"/>
    <property type="evidence" value="ECO:0000315"/>
    <property type="project" value="RGD"/>
</dbReference>
<dbReference type="GO" id="GO:1903901">
    <property type="term" value="P:negative regulation of viral life cycle"/>
    <property type="evidence" value="ECO:0000266"/>
    <property type="project" value="RGD"/>
</dbReference>
<dbReference type="GO" id="GO:0006644">
    <property type="term" value="P:phospholipid metabolic process"/>
    <property type="evidence" value="ECO:0000304"/>
    <property type="project" value="RGD"/>
</dbReference>
<dbReference type="GO" id="GO:0045766">
    <property type="term" value="P:positive regulation of angiogenesis"/>
    <property type="evidence" value="ECO:0000315"/>
    <property type="project" value="RGD"/>
</dbReference>
<dbReference type="GO" id="GO:1903589">
    <property type="term" value="P:positive regulation of blood vessel endothelial cell proliferation involved in sprouting angiogenesis"/>
    <property type="evidence" value="ECO:0000266"/>
    <property type="project" value="RGD"/>
</dbReference>
<dbReference type="GO" id="GO:0090050">
    <property type="term" value="P:positive regulation of cell migration involved in sprouting angiogenesis"/>
    <property type="evidence" value="ECO:0000266"/>
    <property type="project" value="RGD"/>
</dbReference>
<dbReference type="GO" id="GO:1904037">
    <property type="term" value="P:positive regulation of epithelial cell apoptotic process"/>
    <property type="evidence" value="ECO:0000266"/>
    <property type="project" value="RGD"/>
</dbReference>
<dbReference type="GO" id="GO:0016239">
    <property type="term" value="P:positive regulation of macroautophagy"/>
    <property type="evidence" value="ECO:0000266"/>
    <property type="project" value="RGD"/>
</dbReference>
<dbReference type="GO" id="GO:0048661">
    <property type="term" value="P:positive regulation of smooth muscle cell proliferation"/>
    <property type="evidence" value="ECO:0000266"/>
    <property type="project" value="RGD"/>
</dbReference>
<dbReference type="GO" id="GO:0008217">
    <property type="term" value="P:regulation of blood pressure"/>
    <property type="evidence" value="ECO:0000314"/>
    <property type="project" value="RGD"/>
</dbReference>
<dbReference type="GO" id="GO:0006357">
    <property type="term" value="P:regulation of transcription by RNA polymerase II"/>
    <property type="evidence" value="ECO:0000314"/>
    <property type="project" value="BHF-UCL"/>
</dbReference>
<dbReference type="GO" id="GO:1904681">
    <property type="term" value="P:response to 3-methylcholanthrene"/>
    <property type="evidence" value="ECO:0000270"/>
    <property type="project" value="RGD"/>
</dbReference>
<dbReference type="GO" id="GO:1904550">
    <property type="term" value="P:response to arachidonate"/>
    <property type="evidence" value="ECO:0000315"/>
    <property type="project" value="RGD"/>
</dbReference>
<dbReference type="GO" id="GO:0043627">
    <property type="term" value="P:response to estrogen"/>
    <property type="evidence" value="ECO:0000314"/>
    <property type="project" value="RGD"/>
</dbReference>
<dbReference type="GO" id="GO:0042542">
    <property type="term" value="P:response to hydrogen peroxide"/>
    <property type="evidence" value="ECO:0000314"/>
    <property type="project" value="BHF-UCL"/>
</dbReference>
<dbReference type="GO" id="GO:0001666">
    <property type="term" value="P:response to hypoxia"/>
    <property type="evidence" value="ECO:0000315"/>
    <property type="project" value="RGD"/>
</dbReference>
<dbReference type="GO" id="GO:0035094">
    <property type="term" value="P:response to nicotine"/>
    <property type="evidence" value="ECO:0000266"/>
    <property type="project" value="RGD"/>
</dbReference>
<dbReference type="GO" id="GO:0006979">
    <property type="term" value="P:response to oxidative stress"/>
    <property type="evidence" value="ECO:0000314"/>
    <property type="project" value="RGD"/>
</dbReference>
<dbReference type="GO" id="GO:0009410">
    <property type="term" value="P:response to xenobiotic stimulus"/>
    <property type="evidence" value="ECO:0000270"/>
    <property type="project" value="RGD"/>
</dbReference>
<dbReference type="GO" id="GO:0007264">
    <property type="term" value="P:small GTPase-mediated signal transduction"/>
    <property type="evidence" value="ECO:0000314"/>
    <property type="project" value="RGD"/>
</dbReference>
<dbReference type="GO" id="GO:0002246">
    <property type="term" value="P:wound healing involved in inflammatory response"/>
    <property type="evidence" value="ECO:0000266"/>
    <property type="project" value="RGD"/>
</dbReference>
<dbReference type="CDD" id="cd19165">
    <property type="entry name" value="HemeO"/>
    <property type="match status" value="1"/>
</dbReference>
<dbReference type="FunFam" id="1.20.910.10:FF:000001">
    <property type="entry name" value="Heme oxygenase 1"/>
    <property type="match status" value="1"/>
</dbReference>
<dbReference type="Gene3D" id="1.20.910.10">
    <property type="entry name" value="Heme oxygenase-like"/>
    <property type="match status" value="1"/>
</dbReference>
<dbReference type="InterPro" id="IPR002051">
    <property type="entry name" value="Haem_Oase"/>
</dbReference>
<dbReference type="InterPro" id="IPR016053">
    <property type="entry name" value="Haem_Oase-like"/>
</dbReference>
<dbReference type="InterPro" id="IPR016084">
    <property type="entry name" value="Haem_Oase-like_multi-hlx"/>
</dbReference>
<dbReference type="InterPro" id="IPR018207">
    <property type="entry name" value="Haem_oxygenase_CS"/>
</dbReference>
<dbReference type="PANTHER" id="PTHR10720">
    <property type="entry name" value="HEME OXYGENASE"/>
    <property type="match status" value="1"/>
</dbReference>
<dbReference type="PANTHER" id="PTHR10720:SF1">
    <property type="entry name" value="HEME OXYGENASE 1"/>
    <property type="match status" value="1"/>
</dbReference>
<dbReference type="Pfam" id="PF01126">
    <property type="entry name" value="Heme_oxygenase"/>
    <property type="match status" value="1"/>
</dbReference>
<dbReference type="PIRSF" id="PIRSF000343">
    <property type="entry name" value="Haem_Oase"/>
    <property type="match status" value="1"/>
</dbReference>
<dbReference type="PRINTS" id="PR00088">
    <property type="entry name" value="HAEMOXYGNASE"/>
</dbReference>
<dbReference type="SUPFAM" id="SSF48613">
    <property type="entry name" value="Heme oxygenase-like"/>
    <property type="match status" value="1"/>
</dbReference>
<dbReference type="PROSITE" id="PS00593">
    <property type="entry name" value="HEME_OXYGENASE"/>
    <property type="match status" value="1"/>
</dbReference>
<comment type="function">
    <molecule>Heme oxygenase 1</molecule>
    <text evidence="1 5 6 7">Catalyzes the oxidative cleavage of heme at the alpha-methene bridge carbon, released as carbon monoxide (CO), to generate biliverdin IXalpha, while releasing the central heme iron chelate as ferrous iron (PubMed:1575508, PubMed:1935972, PubMed:3865203). Affords protection against programmed cell death and this cytoprotective effect relies on its ability to catabolize free heme and prevent it from sensitizing cells to undergo apoptosis (By similarity).</text>
</comment>
<comment type="function">
    <molecule>Heme oxygenase 1 soluble form</molecule>
    <text evidence="6">Catalyzes the oxidative cleavage of heme at the alpha-methene bridge carbon, released as carbon monoxide (CO), to generate biliverdin IXalpha, while releasing the central heme iron chelate as ferrous iron.</text>
</comment>
<comment type="catalytic activity">
    <reaction evidence="5 6 7">
        <text>heme b + 3 reduced [NADPH--hemoprotein reductase] + 3 O2 = biliverdin IXalpha + CO + Fe(2+) + 3 oxidized [NADPH--hemoprotein reductase] + 3 H2O + H(+)</text>
        <dbReference type="Rhea" id="RHEA:21764"/>
        <dbReference type="Rhea" id="RHEA-COMP:11964"/>
        <dbReference type="Rhea" id="RHEA-COMP:11965"/>
        <dbReference type="ChEBI" id="CHEBI:15377"/>
        <dbReference type="ChEBI" id="CHEBI:15378"/>
        <dbReference type="ChEBI" id="CHEBI:15379"/>
        <dbReference type="ChEBI" id="CHEBI:17245"/>
        <dbReference type="ChEBI" id="CHEBI:29033"/>
        <dbReference type="ChEBI" id="CHEBI:57618"/>
        <dbReference type="ChEBI" id="CHEBI:57991"/>
        <dbReference type="ChEBI" id="CHEBI:58210"/>
        <dbReference type="ChEBI" id="CHEBI:60344"/>
        <dbReference type="EC" id="1.14.14.18"/>
    </reaction>
    <physiologicalReaction direction="left-to-right" evidence="10">
        <dbReference type="Rhea" id="RHEA:21765"/>
    </physiologicalReaction>
</comment>
<comment type="activity regulation">
    <text evidence="5">Inhibited by metalloporphyrins such as Sn- and Zn-protoporphyrins.</text>
</comment>
<comment type="subunit">
    <text evidence="2">Homodimer and higher order homooligomer. Oligomerization is crucial for its stability and function in the endoplasmic reticulum. Interacts with FLVCR2; this interaction is potentiated in the presence of heme.</text>
</comment>
<comment type="subcellular location">
    <subcellularLocation>
        <location evidence="11">Endoplasmic reticulum membrane</location>
        <topology evidence="3">Single-pass type IV membrane protein</topology>
        <orientation evidence="1">Cytoplasmic side</orientation>
    </subcellularLocation>
</comment>
<comment type="induction">
    <text evidence="7">Induced by its substrate heme and CoCl2.</text>
</comment>
<comment type="domain">
    <text evidence="1">The transmembrane domain is necessary for its oligomerization.</text>
</comment>
<comment type="PTM">
    <text evidence="10">A soluble form arises by proteolytic removal of the membrane anchor.</text>
</comment>
<comment type="similarity">
    <text evidence="9">Belongs to the heme oxygenase family.</text>
</comment>
<proteinExistence type="evidence at protein level"/>
<reference key="1">
    <citation type="journal article" date="1987" name="J. Biol. Chem.">
        <title>Nucleotide sequence and organization of the rat heme oxygenase gene.</title>
        <authorList>
            <person name="Mueller R.M."/>
            <person name="Taguchi H."/>
            <person name="Shibahara S."/>
        </authorList>
    </citation>
    <scope>NUCLEOTIDE SEQUENCE [GENOMIC DNA]</scope>
</reference>
<reference key="2">
    <citation type="journal article" date="1985" name="Proc. Natl. Acad. Sci. U.S.A.">
        <title>Cloning and expression of cDNA for rat heme oxygenase.</title>
        <authorList>
            <person name="Shibahara S."/>
            <person name="Mueller R."/>
            <person name="Taguchi H."/>
            <person name="Yoshida T."/>
        </authorList>
    </citation>
    <scope>NUCLEOTIDE SEQUENCE [GENOMIC DNA]</scope>
    <scope>FUNCTION</scope>
    <scope>CATALYTIC ACTIVITY</scope>
    <scope>SUBCELLULAR LOCATION</scope>
    <scope>INDUCTION</scope>
</reference>
<reference key="3">
    <citation type="journal article" date="2004" name="Genome Res.">
        <title>The status, quality, and expansion of the NIH full-length cDNA project: the Mammalian Gene Collection (MGC).</title>
        <authorList>
            <consortium name="The MGC Project Team"/>
        </authorList>
    </citation>
    <scope>NUCLEOTIDE SEQUENCE [LARGE SCALE MRNA]</scope>
    <source>
        <tissue>Thymus</tissue>
    </source>
</reference>
<reference key="4">
    <citation type="journal article" date="1991" name="Eur. J. Biochem.">
        <title>Expression of rat heme oxygenase in Escherichia coli as a catalytically active, full-length form that binds to bacterial membranes.</title>
        <authorList>
            <person name="Ishikawa K."/>
            <person name="Sato M."/>
            <person name="Yoshida T."/>
        </authorList>
    </citation>
    <scope>FUNCTION</scope>
    <scope>CATALYTIC ACTIVITY</scope>
    <scope>PROTEOLYTIC CLEAVAGE</scope>
</reference>
<reference key="5">
    <citation type="journal article" date="1992" name="Arch. Biochem. Biophys.">
        <title>Human heme oxygenase-2: characterization and expression of a full-length cDNA and evidence suggesting that the two HO-2 transcripts may differ by choice of polyadenylation signal.</title>
        <authorList>
            <person name="McCoubrey W.K. Jr."/>
            <person name="Ewing J.F."/>
            <person name="Maines M.D."/>
        </authorList>
    </citation>
    <scope>FUNCTION</scope>
    <scope>CATALYTIC ACTIVITY</scope>
    <scope>ACTIVITY REGULATION</scope>
</reference>
<reference key="6">
    <citation type="journal article" date="2012" name="Nat. Commun.">
        <title>Quantitative maps of protein phosphorylation sites across 14 different rat organs and tissues.</title>
        <authorList>
            <person name="Lundby A."/>
            <person name="Secher A."/>
            <person name="Lage K."/>
            <person name="Nordsborg N.B."/>
            <person name="Dmytriyev A."/>
            <person name="Lundby C."/>
            <person name="Olsen J.V."/>
        </authorList>
    </citation>
    <scope>PHOSPHORYLATION [LARGE SCALE ANALYSIS] AT SER-242</scope>
    <scope>IDENTIFICATION BY MASS SPECTROMETRY [LARGE SCALE ANALYSIS]</scope>
</reference>
<reference key="7">
    <citation type="journal article" date="2000" name="FEBS Lett.">
        <title>Crystal structure of rat heme oxygenase-1 in complex with heme.</title>
        <authorList>
            <person name="Sugishima M."/>
            <person name="Omata Y."/>
            <person name="Kakuta Y."/>
            <person name="Sakamoto H."/>
            <person name="Noguchi M."/>
            <person name="Fukuyama K."/>
        </authorList>
    </citation>
    <scope>X-RAY CRYSTALLOGRAPHY (2.4 ANGSTROMS) OF 1-267</scope>
</reference>
<accession>P06762</accession>
<accession>Q5BK87</accession>
<keyword id="KW-0002">3D-structure</keyword>
<keyword id="KW-0053">Apoptosis</keyword>
<keyword id="KW-0256">Endoplasmic reticulum</keyword>
<keyword id="KW-0349">Heme</keyword>
<keyword id="KW-0408">Iron</keyword>
<keyword id="KW-0472">Membrane</keyword>
<keyword id="KW-0479">Metal-binding</keyword>
<keyword id="KW-0560">Oxidoreductase</keyword>
<keyword id="KW-0597">Phosphoprotein</keyword>
<keyword id="KW-1185">Reference proteome</keyword>
<keyword id="KW-0812">Transmembrane</keyword>
<keyword id="KW-1133">Transmembrane helix</keyword>
<gene>
    <name type="primary">Hmox1</name>
</gene>
<organism>
    <name type="scientific">Rattus norvegicus</name>
    <name type="common">Rat</name>
    <dbReference type="NCBI Taxonomy" id="10116"/>
    <lineage>
        <taxon>Eukaryota</taxon>
        <taxon>Metazoa</taxon>
        <taxon>Chordata</taxon>
        <taxon>Craniata</taxon>
        <taxon>Vertebrata</taxon>
        <taxon>Euteleostomi</taxon>
        <taxon>Mammalia</taxon>
        <taxon>Eutheria</taxon>
        <taxon>Euarchontoglires</taxon>
        <taxon>Glires</taxon>
        <taxon>Rodentia</taxon>
        <taxon>Myomorpha</taxon>
        <taxon>Muroidea</taxon>
        <taxon>Muridae</taxon>
        <taxon>Murinae</taxon>
        <taxon>Rattus</taxon>
    </lineage>
</organism>